<protein>
    <recommendedName>
        <fullName>Ras-like protein 1</fullName>
        <ecNumber evidence="2">3.6.5.2</ecNumber>
    </recommendedName>
</protein>
<keyword id="KW-1003">Cell membrane</keyword>
<keyword id="KW-0342">GTP-binding</keyword>
<keyword id="KW-0378">Hydrolase</keyword>
<keyword id="KW-0449">Lipoprotein</keyword>
<keyword id="KW-0472">Membrane</keyword>
<keyword id="KW-0488">Methylation</keyword>
<keyword id="KW-0547">Nucleotide-binding</keyword>
<keyword id="KW-0564">Palmitate</keyword>
<keyword id="KW-0636">Prenylation</keyword>
<keyword id="KW-1185">Reference proteome</keyword>
<feature type="chain" id="PRO_0000030193" description="Ras-like protein 1">
    <location>
        <begin position="1"/>
        <end position="306"/>
    </location>
</feature>
<feature type="propeptide" id="PRO_0000030194" description="Removed in mature form">
    <location>
        <begin position="307"/>
        <end position="309"/>
    </location>
</feature>
<feature type="region of interest" description="Disordered" evidence="3">
    <location>
        <begin position="177"/>
        <end position="303"/>
    </location>
</feature>
<feature type="short sequence motif" description="Effector region">
    <location>
        <begin position="39"/>
        <end position="47"/>
    </location>
</feature>
<feature type="compositionally biased region" description="Polar residues" evidence="3">
    <location>
        <begin position="179"/>
        <end position="188"/>
    </location>
</feature>
<feature type="compositionally biased region" description="Polar residues" evidence="3">
    <location>
        <begin position="209"/>
        <end position="235"/>
    </location>
</feature>
<feature type="compositionally biased region" description="Basic and acidic residues" evidence="3">
    <location>
        <begin position="236"/>
        <end position="245"/>
    </location>
</feature>
<feature type="compositionally biased region" description="Low complexity" evidence="3">
    <location>
        <begin position="246"/>
        <end position="256"/>
    </location>
</feature>
<feature type="compositionally biased region" description="Polar residues" evidence="3">
    <location>
        <begin position="257"/>
        <end position="296"/>
    </location>
</feature>
<feature type="binding site" evidence="2">
    <location>
        <begin position="20"/>
        <end position="25"/>
    </location>
    <ligand>
        <name>GTP</name>
        <dbReference type="ChEBI" id="CHEBI:37565"/>
    </ligand>
</feature>
<feature type="binding site" evidence="2">
    <location>
        <begin position="36"/>
        <end position="42"/>
    </location>
    <ligand>
        <name>GTP</name>
        <dbReference type="ChEBI" id="CHEBI:37565"/>
    </ligand>
</feature>
<feature type="binding site" evidence="2">
    <location>
        <begin position="66"/>
        <end position="67"/>
    </location>
    <ligand>
        <name>GTP</name>
        <dbReference type="ChEBI" id="CHEBI:37565"/>
    </ligand>
</feature>
<feature type="binding site" evidence="2">
    <location>
        <begin position="123"/>
        <end position="126"/>
    </location>
    <ligand>
        <name>GTP</name>
        <dbReference type="ChEBI" id="CHEBI:37565"/>
    </ligand>
</feature>
<feature type="binding site" evidence="2">
    <location>
        <begin position="153"/>
        <end position="155"/>
    </location>
    <ligand>
        <name>GTP</name>
        <dbReference type="ChEBI" id="CHEBI:37565"/>
    </ligand>
</feature>
<feature type="modified residue" description="Cysteine methyl ester" evidence="6">
    <location>
        <position position="306"/>
    </location>
</feature>
<feature type="lipid moiety-binding region" description="S-palmitoyl cysteine" evidence="7">
    <location>
        <position position="305"/>
    </location>
</feature>
<feature type="lipid moiety-binding region" description="S-farnesyl cysteine" evidence="5">
    <location>
        <position position="306"/>
    </location>
</feature>
<feature type="sequence conflict" description="In Ref. 1; AAA34958." evidence="9" ref="1">
    <original>R</original>
    <variation>I</variation>
    <location>
        <position position="204"/>
    </location>
</feature>
<name>RAS1_YEAST</name>
<sequence>MQGNKSTIREYKIVVVGGGGVGKSALTIQFIQSYFVDEYDPTIEDSYRKQVVIDDKVSILDILDTAGQEEYSAMREQYMRTGEGFLLVYSVTSRNSFDELLSYYQQIQRVKDSDYIPVVVVGNKLDLENERQVSYEDGLRLAKQLNAPFLETSAKQAINVDEAFYSLIRLVRDDGGKYNSMNRQLDNTNEIRDSELTSSATADREKKNNGSYVLDNSLTNAGTGSSSKSAVNHNGETTKRTDEKNYVNQNNNNEGNTKYSSNGNGNRSDISRGNQNNALNSRSKQSAEPQKNSSANARKESSGGCCIIC</sequence>
<reference key="1">
    <citation type="journal article" date="1984" name="Cell">
        <title>Genes in S. cerevisiae encoding proteins with domains homologous to the mammalian ras proteins.</title>
        <authorList>
            <person name="Powers S."/>
            <person name="Kataoka T."/>
            <person name="Fasano O."/>
            <person name="Goldfarb M."/>
            <person name="Strathern J."/>
            <person name="Broach J."/>
            <person name="Wigler M."/>
        </authorList>
    </citation>
    <scope>NUCLEOTIDE SEQUENCE [GENOMIC DNA]</scope>
</reference>
<reference key="2">
    <citation type="journal article" date="1984" name="Nucleic Acids Res.">
        <title>Nucleotide sequence of two rasH related-genes isolated from the yeast Saccharomyces cerevisiae.</title>
        <authorList>
            <person name="Dhar R."/>
            <person name="Nieto A."/>
            <person name="Koller R."/>
            <person name="DeFeo-Jones D."/>
            <person name="Scolnick E.M."/>
        </authorList>
    </citation>
    <scope>NUCLEOTIDE SEQUENCE [GENOMIC DNA]</scope>
</reference>
<reference key="3">
    <citation type="journal article" date="1997" name="Yeast">
        <title>DNA sequencing and analysis of 130 kb from yeast chromosome XV.</title>
        <authorList>
            <person name="Voss H."/>
            <person name="Benes V."/>
            <person name="Andrade M.A."/>
            <person name="Valencia A."/>
            <person name="Rechmann S."/>
            <person name="Teodoru C."/>
            <person name="Schwager C."/>
            <person name="Paces V."/>
            <person name="Sander C."/>
            <person name="Ansorge W."/>
        </authorList>
    </citation>
    <scope>NUCLEOTIDE SEQUENCE [GENOMIC DNA]</scope>
</reference>
<reference key="4">
    <citation type="journal article" date="1997" name="Nature">
        <title>The nucleotide sequence of Saccharomyces cerevisiae chromosome XV.</title>
        <authorList>
            <person name="Dujon B."/>
            <person name="Albermann K."/>
            <person name="Aldea M."/>
            <person name="Alexandraki D."/>
            <person name="Ansorge W."/>
            <person name="Arino J."/>
            <person name="Benes V."/>
            <person name="Bohn C."/>
            <person name="Bolotin-Fukuhara M."/>
            <person name="Bordonne R."/>
            <person name="Boyer J."/>
            <person name="Camasses A."/>
            <person name="Casamayor A."/>
            <person name="Casas C."/>
            <person name="Cheret G."/>
            <person name="Cziepluch C."/>
            <person name="Daignan-Fornier B."/>
            <person name="Dang V.-D."/>
            <person name="de Haan M."/>
            <person name="Delius H."/>
            <person name="Durand P."/>
            <person name="Fairhead C."/>
            <person name="Feldmann H."/>
            <person name="Gaillon L."/>
            <person name="Galisson F."/>
            <person name="Gamo F.-J."/>
            <person name="Gancedo C."/>
            <person name="Goffeau A."/>
            <person name="Goulding S.E."/>
            <person name="Grivell L.A."/>
            <person name="Habbig B."/>
            <person name="Hand N.J."/>
            <person name="Hani J."/>
            <person name="Hattenhorst U."/>
            <person name="Hebling U."/>
            <person name="Hernando Y."/>
            <person name="Herrero E."/>
            <person name="Heumann K."/>
            <person name="Hiesel R."/>
            <person name="Hilger F."/>
            <person name="Hofmann B."/>
            <person name="Hollenberg C.P."/>
            <person name="Hughes B."/>
            <person name="Jauniaux J.-C."/>
            <person name="Kalogeropoulos A."/>
            <person name="Katsoulou C."/>
            <person name="Kordes E."/>
            <person name="Lafuente M.J."/>
            <person name="Landt O."/>
            <person name="Louis E.J."/>
            <person name="Maarse A.C."/>
            <person name="Madania A."/>
            <person name="Mannhaupt G."/>
            <person name="Marck C."/>
            <person name="Martin R.P."/>
            <person name="Mewes H.-W."/>
            <person name="Michaux G."/>
            <person name="Paces V."/>
            <person name="Parle-McDermott A.G."/>
            <person name="Pearson B.M."/>
            <person name="Perrin A."/>
            <person name="Pettersson B."/>
            <person name="Poch O."/>
            <person name="Pohl T.M."/>
            <person name="Poirey R."/>
            <person name="Portetelle D."/>
            <person name="Pujol A."/>
            <person name="Purnelle B."/>
            <person name="Ramezani Rad M."/>
            <person name="Rechmann S."/>
            <person name="Schwager C."/>
            <person name="Schweizer M."/>
            <person name="Sor F."/>
            <person name="Sterky F."/>
            <person name="Tarassov I.A."/>
            <person name="Teodoru C."/>
            <person name="Tettelin H."/>
            <person name="Thierry A."/>
            <person name="Tobiasch E."/>
            <person name="Tzermia M."/>
            <person name="Uhlen M."/>
            <person name="Unseld M."/>
            <person name="Valens M."/>
            <person name="Vandenbol M."/>
            <person name="Vetter I."/>
            <person name="Vlcek C."/>
            <person name="Voet M."/>
            <person name="Volckaert G."/>
            <person name="Voss H."/>
            <person name="Wambutt R."/>
            <person name="Wedler H."/>
            <person name="Wiemann S."/>
            <person name="Winsor B."/>
            <person name="Wolfe K.H."/>
            <person name="Zollner A."/>
            <person name="Zumstein E."/>
            <person name="Kleine K."/>
        </authorList>
    </citation>
    <scope>NUCLEOTIDE SEQUENCE [LARGE SCALE GENOMIC DNA]</scope>
    <source>
        <strain>ATCC 204508 / S288c</strain>
    </source>
</reference>
<reference key="5">
    <citation type="journal article" date="2014" name="G3 (Bethesda)">
        <title>The reference genome sequence of Saccharomyces cerevisiae: Then and now.</title>
        <authorList>
            <person name="Engel S.R."/>
            <person name="Dietrich F.S."/>
            <person name="Fisk D.G."/>
            <person name="Binkley G."/>
            <person name="Balakrishnan R."/>
            <person name="Costanzo M.C."/>
            <person name="Dwight S.S."/>
            <person name="Hitz B.C."/>
            <person name="Karra K."/>
            <person name="Nash R.S."/>
            <person name="Weng S."/>
            <person name="Wong E.D."/>
            <person name="Lloyd P."/>
            <person name="Skrzypek M.S."/>
            <person name="Miyasato S.R."/>
            <person name="Simison M."/>
            <person name="Cherry J.M."/>
        </authorList>
    </citation>
    <scope>GENOME REANNOTATION</scope>
    <source>
        <strain>ATCC 204508 / S288c</strain>
    </source>
</reference>
<reference key="6">
    <citation type="journal article" date="1995" name="J. Cell Biol.">
        <title>The essential OST2 gene encodes the 16-kD subunit of the yeast oligosaccharyltransferase, a highly conserved protein expressed in diverse eukaryotic organisms.</title>
        <authorList>
            <person name="Silberstein S."/>
            <person name="Collins P.G."/>
            <person name="Kelleher D.J."/>
            <person name="Gilmore R."/>
        </authorList>
    </citation>
    <scope>NUCLEOTIDE SEQUENCE [GENOMIC DNA] OF 245-309</scope>
</reference>
<reference key="7">
    <citation type="journal article" date="1986" name="Proc. Natl. Acad. Sci. U.S.A.">
        <title>Processing and fatty acid acylation of RAS1 and RAS2 proteins in Saccharomyces cerevisiae.</title>
        <authorList>
            <person name="Fujiyama A."/>
            <person name="Tamanoi F."/>
        </authorList>
    </citation>
    <scope>PALMITOYLATION AT CYS-305</scope>
</reference>
<reference key="8">
    <citation type="journal article" date="1991" name="EMBO J.">
        <title>The Saccharomyces cerevisiae STE14 gene encodes a methyltransferase that mediates C-terminal methylation of a-factor and RAS proteins.</title>
        <authorList>
            <person name="Hrycyna C.A."/>
            <person name="Sapperstein S.K."/>
            <person name="Clarke S."/>
            <person name="Michaelis S."/>
        </authorList>
    </citation>
    <scope>METHYLATION AT CYS-306 BY STE14</scope>
</reference>
<reference key="9">
    <citation type="journal article" date="1991" name="Proc. Natl. Acad. Sci. U.S.A.">
        <title>RAM2, an essential gene of yeast, and RAM1 encode the two polypeptide components of the farnesyltransferase that prenylates a-factor and Ras proteins.</title>
        <authorList>
            <person name="He B."/>
            <person name="Chen P."/>
            <person name="Chen S.-Y."/>
            <person name="Vancura K.L."/>
            <person name="Michaelis S."/>
            <person name="Powers S."/>
        </authorList>
    </citation>
    <scope>ISOPRENYLATION AT CYS-306 BY RAM1-RAM2</scope>
</reference>
<reference key="10">
    <citation type="journal article" date="1997" name="Science">
        <title>Modulation of Ras and a-factor function by carboxyl-terminal proteolysis.</title>
        <authorList>
            <person name="Boyartchuk V.L."/>
            <person name="Ashby M.N."/>
            <person name="Rine J."/>
        </authorList>
    </citation>
    <scope>PROTEOLYTIC PROCESSING BY RCE1</scope>
</reference>
<reference key="11">
    <citation type="journal article" date="2003" name="Nature">
        <title>Global analysis of protein expression in yeast.</title>
        <authorList>
            <person name="Ghaemmaghami S."/>
            <person name="Huh W.-K."/>
            <person name="Bower K."/>
            <person name="Howson R.W."/>
            <person name="Belle A."/>
            <person name="Dephoure N."/>
            <person name="O'Shea E.K."/>
            <person name="Weissman J.S."/>
        </authorList>
    </citation>
    <scope>LEVEL OF PROTEIN EXPRESSION [LARGE SCALE ANALYSIS]</scope>
</reference>
<reference key="12">
    <citation type="journal article" date="2008" name="Mol. Cell. Proteomics">
        <title>A multidimensional chromatography technology for in-depth phosphoproteome analysis.</title>
        <authorList>
            <person name="Albuquerque C.P."/>
            <person name="Smolka M.B."/>
            <person name="Payne S.H."/>
            <person name="Bafna V."/>
            <person name="Eng J."/>
            <person name="Zhou H."/>
        </authorList>
    </citation>
    <scope>IDENTIFICATION BY MASS SPECTROMETRY [LARGE SCALE ANALYSIS]</scope>
</reference>
<reference key="13">
    <citation type="journal article" date="2009" name="Science">
        <title>Global analysis of Cdk1 substrate phosphorylation sites provides insights into evolution.</title>
        <authorList>
            <person name="Holt L.J."/>
            <person name="Tuch B.B."/>
            <person name="Villen J."/>
            <person name="Johnson A.D."/>
            <person name="Gygi S.P."/>
            <person name="Morgan D.O."/>
        </authorList>
    </citation>
    <scope>IDENTIFICATION BY MASS SPECTROMETRY [LARGE SCALE ANALYSIS]</scope>
</reference>
<reference key="14">
    <citation type="journal article" date="2012" name="Proc. Natl. Acad. Sci. U.S.A.">
        <title>N-terminal acetylome analyses and functional insights of the N-terminal acetyltransferase NatB.</title>
        <authorList>
            <person name="Van Damme P."/>
            <person name="Lasa M."/>
            <person name="Polevoda B."/>
            <person name="Gazquez C."/>
            <person name="Elosegui-Artola A."/>
            <person name="Kim D.S."/>
            <person name="De Juan-Pardo E."/>
            <person name="Demeyer K."/>
            <person name="Hole K."/>
            <person name="Larrea E."/>
            <person name="Timmerman E."/>
            <person name="Prieto J."/>
            <person name="Arnesen T."/>
            <person name="Sherman F."/>
            <person name="Gevaert K."/>
            <person name="Aldabe R."/>
        </authorList>
    </citation>
    <scope>IDENTIFICATION BY MASS SPECTROMETRY [LARGE SCALE ANALYSIS]</scope>
</reference>
<evidence type="ECO:0000250" key="1"/>
<evidence type="ECO:0000250" key="2">
    <source>
        <dbReference type="UniProtKB" id="P01112"/>
    </source>
</evidence>
<evidence type="ECO:0000256" key="3">
    <source>
        <dbReference type="SAM" id="MobiDB-lite"/>
    </source>
</evidence>
<evidence type="ECO:0000269" key="4">
    <source>
    </source>
</evidence>
<evidence type="ECO:0000269" key="5">
    <source>
    </source>
</evidence>
<evidence type="ECO:0000269" key="6">
    <source>
    </source>
</evidence>
<evidence type="ECO:0000269" key="7">
    <source>
    </source>
</evidence>
<evidence type="ECO:0000269" key="8">
    <source>
    </source>
</evidence>
<evidence type="ECO:0000305" key="9"/>
<proteinExistence type="evidence at protein level"/>
<gene>
    <name type="primary">RAS1</name>
    <name type="ordered locus">YOR101W</name>
    <name type="ORF">YOR3205W</name>
</gene>
<dbReference type="EC" id="3.6.5.2" evidence="2"/>
<dbReference type="EMBL" id="K01970">
    <property type="protein sequence ID" value="AAA34958.1"/>
    <property type="molecule type" value="Genomic_DNA"/>
</dbReference>
<dbReference type="EMBL" id="X00527">
    <property type="protein sequence ID" value="CAA25206.1"/>
    <property type="molecule type" value="Genomic_DNA"/>
</dbReference>
<dbReference type="EMBL" id="X94335">
    <property type="protein sequence ID" value="CAA64023.1"/>
    <property type="molecule type" value="Genomic_DNA"/>
</dbReference>
<dbReference type="EMBL" id="Z75009">
    <property type="protein sequence ID" value="CAA99298.1"/>
    <property type="molecule type" value="Genomic_DNA"/>
</dbReference>
<dbReference type="EMBL" id="U32307">
    <property type="protein sequence ID" value="AAC49087.1"/>
    <property type="molecule type" value="Genomic_DNA"/>
</dbReference>
<dbReference type="EMBL" id="BK006948">
    <property type="protein sequence ID" value="DAA10878.1"/>
    <property type="molecule type" value="Genomic_DNA"/>
</dbReference>
<dbReference type="PIR" id="S61661">
    <property type="entry name" value="TVBYR1"/>
</dbReference>
<dbReference type="RefSeq" id="NP_014744.1">
    <property type="nucleotide sequence ID" value="NM_001183520.1"/>
</dbReference>
<dbReference type="SMR" id="P01119"/>
<dbReference type="BioGRID" id="34499">
    <property type="interactions" value="97"/>
</dbReference>
<dbReference type="DIP" id="DIP-1041N"/>
<dbReference type="FunCoup" id="P01119">
    <property type="interactions" value="601"/>
</dbReference>
<dbReference type="IntAct" id="P01119">
    <property type="interactions" value="12"/>
</dbReference>
<dbReference type="MINT" id="P01119"/>
<dbReference type="STRING" id="4932.YOR101W"/>
<dbReference type="TCDB" id="8.A.92.1.15">
    <property type="family name" value="the g-protein AlphaBetaGama complex (gpc) family"/>
</dbReference>
<dbReference type="iPTMnet" id="P01119"/>
<dbReference type="SwissPalm" id="P01119"/>
<dbReference type="PaxDb" id="4932-YOR101W"/>
<dbReference type="PeptideAtlas" id="P01119"/>
<dbReference type="ABCD" id="P01119">
    <property type="antibodies" value="1 sequenced antibody"/>
</dbReference>
<dbReference type="EnsemblFungi" id="YOR101W_mRNA">
    <property type="protein sequence ID" value="YOR101W"/>
    <property type="gene ID" value="YOR101W"/>
</dbReference>
<dbReference type="GeneID" id="854268"/>
<dbReference type="KEGG" id="sce:YOR101W"/>
<dbReference type="AGR" id="SGD:S000005627"/>
<dbReference type="SGD" id="S000005627">
    <property type="gene designation" value="RAS1"/>
</dbReference>
<dbReference type="VEuPathDB" id="FungiDB:YOR101W"/>
<dbReference type="eggNOG" id="KOG0395">
    <property type="taxonomic scope" value="Eukaryota"/>
</dbReference>
<dbReference type="GeneTree" id="ENSGT00940000176617"/>
<dbReference type="HOGENOM" id="CLU_041217_9_0_1"/>
<dbReference type="InParanoid" id="P01119"/>
<dbReference type="OMA" id="ECIKVIV"/>
<dbReference type="OrthoDB" id="5976022at2759"/>
<dbReference type="BioCyc" id="YEAST:G3O-33634-MONOMER"/>
<dbReference type="BioGRID-ORCS" id="854268">
    <property type="hits" value="0 hits in 10 CRISPR screens"/>
</dbReference>
<dbReference type="PRO" id="PR:P01119"/>
<dbReference type="Proteomes" id="UP000002311">
    <property type="component" value="Chromosome XV"/>
</dbReference>
<dbReference type="RNAct" id="P01119">
    <property type="molecule type" value="protein"/>
</dbReference>
<dbReference type="GO" id="GO:0071944">
    <property type="term" value="C:cell periphery"/>
    <property type="evidence" value="ECO:0007005"/>
    <property type="project" value="SGD"/>
</dbReference>
<dbReference type="GO" id="GO:0005737">
    <property type="term" value="C:cytoplasm"/>
    <property type="evidence" value="ECO:0007005"/>
    <property type="project" value="SGD"/>
</dbReference>
<dbReference type="GO" id="GO:0005634">
    <property type="term" value="C:nucleus"/>
    <property type="evidence" value="ECO:0007005"/>
    <property type="project" value="SGD"/>
</dbReference>
<dbReference type="GO" id="GO:0005886">
    <property type="term" value="C:plasma membrane"/>
    <property type="evidence" value="ECO:0000314"/>
    <property type="project" value="SGD"/>
</dbReference>
<dbReference type="GO" id="GO:0003925">
    <property type="term" value="F:G protein activity"/>
    <property type="evidence" value="ECO:0007669"/>
    <property type="project" value="UniProtKB-EC"/>
</dbReference>
<dbReference type="GO" id="GO:0019003">
    <property type="term" value="F:GDP binding"/>
    <property type="evidence" value="ECO:0000318"/>
    <property type="project" value="GO_Central"/>
</dbReference>
<dbReference type="GO" id="GO:0005525">
    <property type="term" value="F:GTP binding"/>
    <property type="evidence" value="ECO:0000318"/>
    <property type="project" value="GO_Central"/>
</dbReference>
<dbReference type="GO" id="GO:0003924">
    <property type="term" value="F:GTPase activity"/>
    <property type="evidence" value="ECO:0000314"/>
    <property type="project" value="SGD"/>
</dbReference>
<dbReference type="GO" id="GO:0007189">
    <property type="term" value="P:adenylate cyclase-activating G protein-coupled receptor signaling pathway"/>
    <property type="evidence" value="ECO:0000314"/>
    <property type="project" value="SGD"/>
</dbReference>
<dbReference type="GO" id="GO:0097271">
    <property type="term" value="P:protein localization to bud neck"/>
    <property type="evidence" value="ECO:0000316"/>
    <property type="project" value="SGD"/>
</dbReference>
<dbReference type="FunFam" id="3.40.50.300:FF:000080">
    <property type="entry name" value="Ras-like GTPase Ras1"/>
    <property type="match status" value="1"/>
</dbReference>
<dbReference type="Gene3D" id="3.40.50.300">
    <property type="entry name" value="P-loop containing nucleotide triphosphate hydrolases"/>
    <property type="match status" value="1"/>
</dbReference>
<dbReference type="InterPro" id="IPR027417">
    <property type="entry name" value="P-loop_NTPase"/>
</dbReference>
<dbReference type="InterPro" id="IPR005225">
    <property type="entry name" value="Small_GTP-bd"/>
</dbReference>
<dbReference type="InterPro" id="IPR001806">
    <property type="entry name" value="Small_GTPase"/>
</dbReference>
<dbReference type="InterPro" id="IPR020849">
    <property type="entry name" value="Small_GTPase_Ras-type"/>
</dbReference>
<dbReference type="NCBIfam" id="TIGR00231">
    <property type="entry name" value="small_GTP"/>
    <property type="match status" value="1"/>
</dbReference>
<dbReference type="PANTHER" id="PTHR24070">
    <property type="entry name" value="RAS, DI-RAS, AND RHEB FAMILY MEMBERS OF SMALL GTPASE SUPERFAMILY"/>
    <property type="match status" value="1"/>
</dbReference>
<dbReference type="Pfam" id="PF00071">
    <property type="entry name" value="Ras"/>
    <property type="match status" value="1"/>
</dbReference>
<dbReference type="PRINTS" id="PR00449">
    <property type="entry name" value="RASTRNSFRMNG"/>
</dbReference>
<dbReference type="SMART" id="SM00175">
    <property type="entry name" value="RAB"/>
    <property type="match status" value="1"/>
</dbReference>
<dbReference type="SMART" id="SM00176">
    <property type="entry name" value="RAN"/>
    <property type="match status" value="1"/>
</dbReference>
<dbReference type="SMART" id="SM00173">
    <property type="entry name" value="RAS"/>
    <property type="match status" value="1"/>
</dbReference>
<dbReference type="SMART" id="SM00174">
    <property type="entry name" value="RHO"/>
    <property type="match status" value="1"/>
</dbReference>
<dbReference type="SUPFAM" id="SSF52540">
    <property type="entry name" value="P-loop containing nucleoside triphosphate hydrolases"/>
    <property type="match status" value="1"/>
</dbReference>
<dbReference type="PROSITE" id="PS51421">
    <property type="entry name" value="RAS"/>
    <property type="match status" value="1"/>
</dbReference>
<organism>
    <name type="scientific">Saccharomyces cerevisiae (strain ATCC 204508 / S288c)</name>
    <name type="common">Baker's yeast</name>
    <dbReference type="NCBI Taxonomy" id="559292"/>
    <lineage>
        <taxon>Eukaryota</taxon>
        <taxon>Fungi</taxon>
        <taxon>Dikarya</taxon>
        <taxon>Ascomycota</taxon>
        <taxon>Saccharomycotina</taxon>
        <taxon>Saccharomycetes</taxon>
        <taxon>Saccharomycetales</taxon>
        <taxon>Saccharomycetaceae</taxon>
        <taxon>Saccharomyces</taxon>
    </lineage>
</organism>
<accession>P01119</accession>
<accession>D6W2G2</accession>
<comment type="function">
    <text>The S.cerevisiae Ras proteins modulate the activity of the adenylate cyclase catalytic subunit and therefore affect the biosynthesis of cyclic-AMP.</text>
</comment>
<comment type="catalytic activity">
    <reaction evidence="2">
        <text>GTP + H2O = GDP + phosphate + H(+)</text>
        <dbReference type="Rhea" id="RHEA:19669"/>
        <dbReference type="ChEBI" id="CHEBI:15377"/>
        <dbReference type="ChEBI" id="CHEBI:15378"/>
        <dbReference type="ChEBI" id="CHEBI:37565"/>
        <dbReference type="ChEBI" id="CHEBI:43474"/>
        <dbReference type="ChEBI" id="CHEBI:58189"/>
        <dbReference type="EC" id="3.6.5.2"/>
    </reaction>
</comment>
<comment type="activity regulation">
    <text>Alternates between an inactive form bound to GDP and an active form bound to GTP. Activated by guanine nucleotide-exchange factor (GEF) CDC25 and inactivated by GTPase-activating proteins (GAPs) IRA1 and IRA2.</text>
</comment>
<comment type="subcellular location">
    <subcellularLocation>
        <location>Cell membrane</location>
        <topology>Lipid-anchor</topology>
    </subcellularLocation>
</comment>
<comment type="PTM">
    <text evidence="6 8">Farnesylated by RAM1-RAM2, which is required for targeting RAS1 to the cytoplasmic site of the endoplasmic reticulum, where proteolytic processing of the C-terminus by RCE1 and methylation of the resulting carboxyl group by STE14 occurs.</text>
</comment>
<comment type="PTM">
    <text evidence="1">Palmitoylated by the ERF2-SHR5 complex, which is required for proper plasma membrane localization of RAS1.</text>
</comment>
<comment type="miscellaneous">
    <text evidence="4">Present with 2050 molecules/cell in log phase SD medium.</text>
</comment>
<comment type="similarity">
    <text evidence="9">Belongs to the small GTPase superfamily. Ras family.</text>
</comment>